<accession>Q0A461</accession>
<name>RDRP_I68A3</name>
<comment type="function">
    <text evidence="1">RNA-dependent RNA polymerase which is responsible for replication and transcription of virus RNA segments. The transcription of viral mRNAs occurs by a unique mechanism called cap-snatching. 5' methylated caps of cellular mRNAs are cleaved after 10-13 nucleotides by PA. In turn, these short capped RNAs are used as primers by PB1 for transcription of viral mRNAs. During virus replication, PB1 initiates RNA synthesis and copy vRNA into complementary RNA (cRNA) which in turn serves as a template for the production of more vRNAs.</text>
</comment>
<comment type="catalytic activity">
    <reaction evidence="1">
        <text>RNA(n) + a ribonucleoside 5'-triphosphate = RNA(n+1) + diphosphate</text>
        <dbReference type="Rhea" id="RHEA:21248"/>
        <dbReference type="Rhea" id="RHEA-COMP:14527"/>
        <dbReference type="Rhea" id="RHEA-COMP:17342"/>
        <dbReference type="ChEBI" id="CHEBI:33019"/>
        <dbReference type="ChEBI" id="CHEBI:61557"/>
        <dbReference type="ChEBI" id="CHEBI:140395"/>
        <dbReference type="EC" id="2.7.7.48"/>
    </reaction>
</comment>
<comment type="subunit">
    <text evidence="1">Influenza RNA polymerase is composed of three subunits: PB1, PB2 and PA. Interacts (via N-terminus) with PA (via C-terminus). Interacts (via C-terminus) with PB2 (via N-terminus); this interaction is essential for transcription initiation.</text>
</comment>
<comment type="subcellular location">
    <subcellularLocation>
        <location evidence="1">Host nucleus</location>
    </subcellularLocation>
    <subcellularLocation>
        <location evidence="1">Host cytoplasm</location>
    </subcellularLocation>
</comment>
<comment type="PTM">
    <text evidence="1">Phosphorylated by host PRKCA.</text>
</comment>
<comment type="similarity">
    <text evidence="1">Belongs to the influenza viruses polymerase PB1 family.</text>
</comment>
<sequence>MDVNPTLIFLKVPAQNAISTTFPYTGDPPYSHGTGTGYTMDTVNRTHQYSEKGKWTTNTETGAPQLNPIDGPLPEDNEPSGYAQTDCVLEAMAFLEESHPGIFENSCLETMEAVQQTRVDKLTQGRQTYDWTLNRNQPAATALANTIEVFRSNGLTANESGRLIDFLKDVMESMDKEEMEITTHFQRKRRVRDNMTKKMVTQRTIGKKKQRLNKRSYLIRALTLNTMTKDAERGKLRRRAIATPGMQIRGFVYFVETLARSICEKLEQSGLPVGGNEKKAKLANVVRKMMTNSQDTELSFTITGDNTKWNENQNPRMFLAMITYITRNQPEWFRNVLSIAPLMFSNKMARLGKGYMFESKSMKLRTQIPAEMLASIDLKYFNDSTRKKIEKIRPLLIDGTASLSPGMMMGMFNMLSTVLGVSILNLGQKRYTKTTYWWDGLQSSDDFALIVNAPNHEGIQAGVDRFYRTCKLVGINMSKKKSYINRTGTFEFTSFFYRYGFVANFSMELPSFGVSGINESADMSIGVTVIKNNMINNDLGPATAQMALQLFIKDYRYTYRCHRGDTQIQTRRSFELKKLWEQTRSKAGLLVSDGGPNLYNIRNLHIPEVCLKWELMDEDYQGRLCNPLNPFVSHKEIESVNNAVVMPAHGPAKSMEYDAVATTHSWIPKRNRSILNTSQRGILEDEQMYQKCCNLFEKFFPSSSYRRPVGISSMVEAMVSRARIDARIDFESGRIKKEEFAEIMKICSTIEELKRQK</sequence>
<feature type="chain" id="PRO_0000277461" description="RNA-directed RNA polymerase catalytic subunit">
    <location>
        <begin position="1"/>
        <end position="757"/>
    </location>
</feature>
<feature type="domain" description="RdRp catalytic" evidence="1">
    <location>
        <begin position="286"/>
        <end position="483"/>
    </location>
</feature>
<feature type="region of interest" description="Promoter-binding site" evidence="1">
    <location>
        <begin position="249"/>
        <end position="256"/>
    </location>
</feature>
<feature type="short sequence motif" description="Nuclear localization signal" evidence="1">
    <location>
        <begin position="187"/>
        <end position="195"/>
    </location>
</feature>
<feature type="short sequence motif" description="Nuclear localization signal" evidence="1">
    <location>
        <begin position="203"/>
        <end position="216"/>
    </location>
</feature>
<dbReference type="EC" id="2.7.7.48" evidence="1"/>
<dbReference type="EMBL" id="CY014662">
    <property type="protein sequence ID" value="ABI92179.1"/>
    <property type="molecule type" value="Other_RNA"/>
</dbReference>
<dbReference type="SMR" id="Q0A461"/>
<dbReference type="Proteomes" id="UP000007770">
    <property type="component" value="Genome"/>
</dbReference>
<dbReference type="GO" id="GO:0030430">
    <property type="term" value="C:host cell cytoplasm"/>
    <property type="evidence" value="ECO:0007669"/>
    <property type="project" value="UniProtKB-SubCell"/>
</dbReference>
<dbReference type="GO" id="GO:0042025">
    <property type="term" value="C:host cell nucleus"/>
    <property type="evidence" value="ECO:0007669"/>
    <property type="project" value="UniProtKB-SubCell"/>
</dbReference>
<dbReference type="GO" id="GO:0000166">
    <property type="term" value="F:nucleotide binding"/>
    <property type="evidence" value="ECO:0007669"/>
    <property type="project" value="UniProtKB-UniRule"/>
</dbReference>
<dbReference type="GO" id="GO:0003723">
    <property type="term" value="F:RNA binding"/>
    <property type="evidence" value="ECO:0007669"/>
    <property type="project" value="InterPro"/>
</dbReference>
<dbReference type="GO" id="GO:0003968">
    <property type="term" value="F:RNA-directed RNA polymerase activity"/>
    <property type="evidence" value="ECO:0007669"/>
    <property type="project" value="UniProtKB-UniRule"/>
</dbReference>
<dbReference type="GO" id="GO:0006351">
    <property type="term" value="P:DNA-templated transcription"/>
    <property type="evidence" value="ECO:0007669"/>
    <property type="project" value="UniProtKB-UniRule"/>
</dbReference>
<dbReference type="GO" id="GO:0039657">
    <property type="term" value="P:symbiont-mediated suppression of host gene expression"/>
    <property type="evidence" value="ECO:0007669"/>
    <property type="project" value="UniProtKB-KW"/>
</dbReference>
<dbReference type="GO" id="GO:0039523">
    <property type="term" value="P:symbiont-mediated suppression of host mRNA transcription via inhibition of RNA polymerase II activity"/>
    <property type="evidence" value="ECO:0007669"/>
    <property type="project" value="UniProtKB-UniRule"/>
</dbReference>
<dbReference type="GO" id="GO:0039694">
    <property type="term" value="P:viral RNA genome replication"/>
    <property type="evidence" value="ECO:0007669"/>
    <property type="project" value="UniProtKB-UniRule"/>
</dbReference>
<dbReference type="GO" id="GO:0019083">
    <property type="term" value="P:viral transcription"/>
    <property type="evidence" value="ECO:0007669"/>
    <property type="project" value="UniProtKB-KW"/>
</dbReference>
<dbReference type="Gene3D" id="6.10.140.720">
    <property type="match status" value="1"/>
</dbReference>
<dbReference type="HAMAP" id="MF_04065">
    <property type="entry name" value="INFV_RDRP"/>
    <property type="match status" value="1"/>
</dbReference>
<dbReference type="InterPro" id="IPR007099">
    <property type="entry name" value="RNA-dir_pol_NSvirus"/>
</dbReference>
<dbReference type="InterPro" id="IPR001407">
    <property type="entry name" value="RNA_pol_PB1_influenza"/>
</dbReference>
<dbReference type="Pfam" id="PF00602">
    <property type="entry name" value="Flu_PB1"/>
    <property type="match status" value="1"/>
</dbReference>
<dbReference type="PIRSF" id="PIRSF000827">
    <property type="entry name" value="RdRPol_OMV"/>
    <property type="match status" value="1"/>
</dbReference>
<dbReference type="PROSITE" id="PS50525">
    <property type="entry name" value="RDRP_SSRNA_NEG_SEG"/>
    <property type="match status" value="1"/>
</dbReference>
<organismHost>
    <name type="scientific">Aves</name>
    <dbReference type="NCBI Taxonomy" id="8782"/>
</organismHost>
<gene>
    <name evidence="1" type="primary">PB1</name>
</gene>
<reference key="1">
    <citation type="journal article" date="2006" name="Science">
        <title>Large-scale sequence analysis of avian influenza isolates.</title>
        <authorList>
            <person name="Obenauer J.C."/>
            <person name="Denson J."/>
            <person name="Mehta P.K."/>
            <person name="Su X."/>
            <person name="Mukatira S."/>
            <person name="Finkelstein D.B."/>
            <person name="Xu X."/>
            <person name="Wang J."/>
            <person name="Ma J."/>
            <person name="Fan Y."/>
            <person name="Rakestraw K.M."/>
            <person name="Webster R.G."/>
            <person name="Hoffmann E."/>
            <person name="Krauss S."/>
            <person name="Zheng J."/>
            <person name="Zhang Z."/>
            <person name="Naeve C.W."/>
        </authorList>
    </citation>
    <scope>NUCLEOTIDE SEQUENCE [GENOMIC RNA]</scope>
</reference>
<keyword id="KW-1262">Eukaryotic host gene expression shutoff by virus</keyword>
<keyword id="KW-1191">Eukaryotic host transcription shutoff by virus</keyword>
<keyword id="KW-1035">Host cytoplasm</keyword>
<keyword id="KW-1190">Host gene expression shutoff by virus</keyword>
<keyword id="KW-1048">Host nucleus</keyword>
<keyword id="KW-0945">Host-virus interaction</keyword>
<keyword id="KW-1104">Inhibition of host RNA polymerase II by virus</keyword>
<keyword id="KW-0547">Nucleotide-binding</keyword>
<keyword id="KW-0548">Nucleotidyltransferase</keyword>
<keyword id="KW-0597">Phosphoprotein</keyword>
<keyword id="KW-0696">RNA-directed RNA polymerase</keyword>
<keyword id="KW-0808">Transferase</keyword>
<keyword id="KW-0693">Viral RNA replication</keyword>
<keyword id="KW-1195">Viral transcription</keyword>
<evidence type="ECO:0000255" key="1">
    <source>
        <dbReference type="HAMAP-Rule" id="MF_04065"/>
    </source>
</evidence>
<proteinExistence type="inferred from homology"/>
<protein>
    <recommendedName>
        <fullName evidence="1">RNA-directed RNA polymerase catalytic subunit</fullName>
        <ecNumber evidence="1">2.7.7.48</ecNumber>
    </recommendedName>
    <alternativeName>
        <fullName evidence="1">Polymerase basic protein 1</fullName>
        <shortName evidence="1">PB1</shortName>
    </alternativeName>
    <alternativeName>
        <fullName evidence="1">RNA-directed RNA polymerase subunit P1</fullName>
    </alternativeName>
</protein>
<organism>
    <name type="scientific">Influenza A virus (strain A/Turkey/Ontario/6118/1968 H8N4)</name>
    <dbReference type="NCBI Taxonomy" id="311175"/>
    <lineage>
        <taxon>Viruses</taxon>
        <taxon>Riboviria</taxon>
        <taxon>Orthornavirae</taxon>
        <taxon>Negarnaviricota</taxon>
        <taxon>Polyploviricotina</taxon>
        <taxon>Insthoviricetes</taxon>
        <taxon>Articulavirales</taxon>
        <taxon>Orthomyxoviridae</taxon>
        <taxon>Alphainfluenzavirus</taxon>
        <taxon>Alphainfluenzavirus influenzae</taxon>
        <taxon>Influenza A virus</taxon>
    </lineage>
</organism>